<name>PSBU_LEPLM</name>
<keyword id="KW-0903">Direct protein sequencing</keyword>
<keyword id="KW-0249">Electron transport</keyword>
<keyword id="KW-0472">Membrane</keyword>
<keyword id="KW-0602">Photosynthesis</keyword>
<keyword id="KW-0604">Photosystem II</keyword>
<keyword id="KW-0732">Signal</keyword>
<keyword id="KW-0793">Thylakoid</keyword>
<keyword id="KW-0813">Transport</keyword>
<accession>P20094</accession>
<sequence>MKRLVGVLMILGLMLTSWGLLGSPQTAIAASLSPLSFNPSPVLAEQQFRNAMDDKLATDFGKKIDLNNTNVRAFMQYPGMYPTLARMILKNAPFESVEDVLKMPGLTDTQKEILKNNFSNFVVSPPLDALVEGGDRFNNGIYR</sequence>
<comment type="function">
    <text evidence="1">One of the extrinsic, lumenal subunits of photosystem II (PSII). PSII is a light-driven water plastoquinone oxidoreductase, using light energy to abstract electrons from H(2)O, generating a proton gradient subsequently used for ATP formation. The extrinsic proteins stabilize the structure of photosystem II oxygen-evolving complex (OEC), the ion environment of oxygen evolution and protect the OEC against heat-induced inactivation.</text>
</comment>
<comment type="subunit">
    <text evidence="1">PSII is composed of 1 copy each of membrane proteins PsbA, PsbB, PsbC, PsbD, PsbE, PsbF, PsbH, PsbI, PsbJ, PsbK, PsbL, PsbM, PsbT, PsbX, PsbY, PsbZ, Psb30/Ycf12, peripheral proteins PsbO, CyanoQ (PsbQ), PsbU, PsbV and a large number of cofactors. It forms dimeric complexes.</text>
</comment>
<comment type="subcellular location">
    <subcellularLocation>
        <location evidence="1">Cellular thylakoid membrane</location>
        <topology evidence="1">Peripheral membrane protein</topology>
        <orientation evidence="1">Lumenal side</orientation>
    </subcellularLocation>
</comment>
<comment type="similarity">
    <text evidence="1">Belongs to the PsbU family.</text>
</comment>
<reference key="1">
    <citation type="journal article" date="1989" name="Mol. Gen. Genet.">
        <title>Gene sequence for the 9 kDa component of Photosystem II from the cyanobacterium Phormidium laminosum indicates similarities between cyanobacterial and other leader sequences.</title>
        <authorList>
            <person name="Wallace T.P."/>
            <person name="Stewart A.C."/>
            <person name="Pappin D."/>
            <person name="Howe C.J."/>
        </authorList>
    </citation>
    <scope>NUCLEOTIDE SEQUENCE [GENOMIC DNA]</scope>
    <scope>PARTIAL PROTEIN SEQUENCE</scope>
    <source>
        <strain>OH-1-P-CL1</strain>
    </source>
</reference>
<dbReference type="EMBL" id="X52660">
    <property type="protein sequence ID" value="CAA36886.1"/>
    <property type="molecule type" value="Genomic_DNA"/>
</dbReference>
<dbReference type="PIR" id="S04413">
    <property type="entry name" value="S04413"/>
</dbReference>
<dbReference type="SMR" id="P20094"/>
<dbReference type="GO" id="GO:0019898">
    <property type="term" value="C:extrinsic component of membrane"/>
    <property type="evidence" value="ECO:0007669"/>
    <property type="project" value="InterPro"/>
</dbReference>
<dbReference type="GO" id="GO:0009654">
    <property type="term" value="C:photosystem II oxygen evolving complex"/>
    <property type="evidence" value="ECO:0007669"/>
    <property type="project" value="InterPro"/>
</dbReference>
<dbReference type="GO" id="GO:0031676">
    <property type="term" value="C:plasma membrane-derived thylakoid membrane"/>
    <property type="evidence" value="ECO:0007669"/>
    <property type="project" value="UniProtKB-SubCell"/>
</dbReference>
<dbReference type="GO" id="GO:0015979">
    <property type="term" value="P:photosynthesis"/>
    <property type="evidence" value="ECO:0007669"/>
    <property type="project" value="UniProtKB-UniRule"/>
</dbReference>
<dbReference type="GO" id="GO:0042549">
    <property type="term" value="P:photosystem II stabilization"/>
    <property type="evidence" value="ECO:0007669"/>
    <property type="project" value="InterPro"/>
</dbReference>
<dbReference type="Gene3D" id="1.10.150.320">
    <property type="entry name" value="Photosystem II 12 kDa extrinsic protein"/>
    <property type="match status" value="1"/>
</dbReference>
<dbReference type="HAMAP" id="MF_00589">
    <property type="entry name" value="PSII_PsbU"/>
    <property type="match status" value="1"/>
</dbReference>
<dbReference type="InterPro" id="IPR010527">
    <property type="entry name" value="PSII_PsbU"/>
</dbReference>
<dbReference type="NCBIfam" id="NF002708">
    <property type="entry name" value="PRK02515.1"/>
    <property type="match status" value="1"/>
</dbReference>
<dbReference type="Pfam" id="PF06514">
    <property type="entry name" value="PsbU"/>
    <property type="match status" value="1"/>
</dbReference>
<dbReference type="SUPFAM" id="SSF81585">
    <property type="entry name" value="PsbU/PolX domain-like"/>
    <property type="match status" value="1"/>
</dbReference>
<proteinExistence type="evidence at protein level"/>
<feature type="signal peptide" evidence="1">
    <location>
        <begin position="1"/>
        <end position="29"/>
    </location>
</feature>
<feature type="propeptide" id="PRO_0000029599">
    <location>
        <begin position="30"/>
        <end position="44"/>
    </location>
</feature>
<feature type="chain" id="PRO_0000029600" description="Photosystem II extrinsic protein U">
    <location>
        <begin position="45"/>
        <end position="143"/>
    </location>
</feature>
<organism>
    <name type="scientific">Leptolyngbya laminosa</name>
    <name type="common">Phormidium laminosum</name>
    <dbReference type="NCBI Taxonomy" id="477181"/>
    <lineage>
        <taxon>Bacteria</taxon>
        <taxon>Bacillati</taxon>
        <taxon>Cyanobacteriota</taxon>
        <taxon>Cyanophyceae</taxon>
        <taxon>Leptolyngbyales</taxon>
        <taxon>Leptolyngbyaceae</taxon>
        <taxon>Leptolyngbya group</taxon>
        <taxon>Leptolyngbya</taxon>
    </lineage>
</organism>
<gene>
    <name evidence="1" type="primary">psbU</name>
</gene>
<protein>
    <recommendedName>
        <fullName evidence="1">Photosystem II extrinsic protein U</fullName>
        <shortName evidence="1">PSII-U</shortName>
        <shortName evidence="1">PsbU</shortName>
    </recommendedName>
    <alternativeName>
        <fullName evidence="2">9 kDa polypeptide</fullName>
    </alternativeName>
    <alternativeName>
        <fullName evidence="1">Photosystem II 12 kDa extrinsic protein</fullName>
        <shortName evidence="1">PS II complex 12 kDa extrinsic protein</shortName>
    </alternativeName>
</protein>
<evidence type="ECO:0000255" key="1">
    <source>
        <dbReference type="HAMAP-Rule" id="MF_00589"/>
    </source>
</evidence>
<evidence type="ECO:0000303" key="2">
    <source>
    </source>
</evidence>